<proteinExistence type="inferred from homology"/>
<comment type="function">
    <text evidence="1">One of the essential components for the initiation of protein synthesis. Stabilizes the binding of IF-2 and IF-3 on the 30S subunit to which N-formylmethionyl-tRNA(fMet) subsequently binds. Helps modulate mRNA selection, yielding the 30S pre-initiation complex (PIC). Upon addition of the 50S ribosomal subunit IF-1, IF-2 and IF-3 are released leaving the mature 70S translation initiation complex.</text>
</comment>
<comment type="subunit">
    <text evidence="1">Component of the 30S ribosomal translation pre-initiation complex which assembles on the 30S ribosome in the order IF-2 and IF-3, IF-1 and N-formylmethionyl-tRNA(fMet); mRNA recruitment can occur at any time during PIC assembly.</text>
</comment>
<comment type="subcellular location">
    <subcellularLocation>
        <location evidence="1">Cytoplasm</location>
    </subcellularLocation>
</comment>
<comment type="similarity">
    <text evidence="1">Belongs to the IF-1 family.</text>
</comment>
<name>IF1_NEIMA</name>
<accession>P65112</accession>
<accession>A1INW9</accession>
<accession>Q9JR12</accession>
<evidence type="ECO:0000255" key="1">
    <source>
        <dbReference type="HAMAP-Rule" id="MF_00075"/>
    </source>
</evidence>
<keyword id="KW-0963">Cytoplasm</keyword>
<keyword id="KW-0396">Initiation factor</keyword>
<keyword id="KW-0648">Protein biosynthesis</keyword>
<keyword id="KW-0694">RNA-binding</keyword>
<keyword id="KW-0699">rRNA-binding</keyword>
<sequence>MAKEDTIQMQGEILETLPNATFKVKLENDHIVLGHISGKMRMHYIRISPGDKVTVELTPYDLTRARIVFRAR</sequence>
<gene>
    <name evidence="1" type="primary">infA</name>
    <name type="ordered locus">NMA0108</name>
</gene>
<protein>
    <recommendedName>
        <fullName evidence="1">Translation initiation factor IF-1</fullName>
    </recommendedName>
</protein>
<reference key="1">
    <citation type="journal article" date="2000" name="Nature">
        <title>Complete DNA sequence of a serogroup A strain of Neisseria meningitidis Z2491.</title>
        <authorList>
            <person name="Parkhill J."/>
            <person name="Achtman M."/>
            <person name="James K.D."/>
            <person name="Bentley S.D."/>
            <person name="Churcher C.M."/>
            <person name="Klee S.R."/>
            <person name="Morelli G."/>
            <person name="Basham D."/>
            <person name="Brown D."/>
            <person name="Chillingworth T."/>
            <person name="Davies R.M."/>
            <person name="Davis P."/>
            <person name="Devlin K."/>
            <person name="Feltwell T."/>
            <person name="Hamlin N."/>
            <person name="Holroyd S."/>
            <person name="Jagels K."/>
            <person name="Leather S."/>
            <person name="Moule S."/>
            <person name="Mungall K.L."/>
            <person name="Quail M.A."/>
            <person name="Rajandream M.A."/>
            <person name="Rutherford K.M."/>
            <person name="Simmonds M."/>
            <person name="Skelton J."/>
            <person name="Whitehead S."/>
            <person name="Spratt B.G."/>
            <person name="Barrell B.G."/>
        </authorList>
    </citation>
    <scope>NUCLEOTIDE SEQUENCE [LARGE SCALE GENOMIC DNA]</scope>
    <source>
        <strain>DSM 15465 / Z2491</strain>
    </source>
</reference>
<feature type="chain" id="PRO_0000095832" description="Translation initiation factor IF-1">
    <location>
        <begin position="1"/>
        <end position="72"/>
    </location>
</feature>
<feature type="domain" description="S1-like" evidence="1">
    <location>
        <begin position="1"/>
        <end position="72"/>
    </location>
</feature>
<organism>
    <name type="scientific">Neisseria meningitidis serogroup A / serotype 4A (strain DSM 15465 / Z2491)</name>
    <dbReference type="NCBI Taxonomy" id="122587"/>
    <lineage>
        <taxon>Bacteria</taxon>
        <taxon>Pseudomonadati</taxon>
        <taxon>Pseudomonadota</taxon>
        <taxon>Betaproteobacteria</taxon>
        <taxon>Neisseriales</taxon>
        <taxon>Neisseriaceae</taxon>
        <taxon>Neisseria</taxon>
    </lineage>
</organism>
<dbReference type="EMBL" id="AL157959">
    <property type="protein sequence ID" value="CAM07426.1"/>
    <property type="molecule type" value="Genomic_DNA"/>
</dbReference>
<dbReference type="RefSeq" id="WP_002215452.1">
    <property type="nucleotide sequence ID" value="NC_003116.1"/>
</dbReference>
<dbReference type="SMR" id="P65112"/>
<dbReference type="EnsemblBacteria" id="CAM07426">
    <property type="protein sequence ID" value="CAM07426"/>
    <property type="gene ID" value="NMA0108"/>
</dbReference>
<dbReference type="GeneID" id="93387238"/>
<dbReference type="KEGG" id="nma:NMA0108"/>
<dbReference type="HOGENOM" id="CLU_151267_1_0_4"/>
<dbReference type="Proteomes" id="UP000000626">
    <property type="component" value="Chromosome"/>
</dbReference>
<dbReference type="GO" id="GO:0005829">
    <property type="term" value="C:cytosol"/>
    <property type="evidence" value="ECO:0007669"/>
    <property type="project" value="TreeGrafter"/>
</dbReference>
<dbReference type="GO" id="GO:0043022">
    <property type="term" value="F:ribosome binding"/>
    <property type="evidence" value="ECO:0007669"/>
    <property type="project" value="UniProtKB-UniRule"/>
</dbReference>
<dbReference type="GO" id="GO:0019843">
    <property type="term" value="F:rRNA binding"/>
    <property type="evidence" value="ECO:0007669"/>
    <property type="project" value="UniProtKB-UniRule"/>
</dbReference>
<dbReference type="GO" id="GO:0003743">
    <property type="term" value="F:translation initiation factor activity"/>
    <property type="evidence" value="ECO:0007669"/>
    <property type="project" value="UniProtKB-UniRule"/>
</dbReference>
<dbReference type="CDD" id="cd04451">
    <property type="entry name" value="S1_IF1"/>
    <property type="match status" value="1"/>
</dbReference>
<dbReference type="FunFam" id="2.40.50.140:FF:000002">
    <property type="entry name" value="Translation initiation factor IF-1"/>
    <property type="match status" value="1"/>
</dbReference>
<dbReference type="Gene3D" id="2.40.50.140">
    <property type="entry name" value="Nucleic acid-binding proteins"/>
    <property type="match status" value="1"/>
</dbReference>
<dbReference type="HAMAP" id="MF_00075">
    <property type="entry name" value="IF_1"/>
    <property type="match status" value="1"/>
</dbReference>
<dbReference type="InterPro" id="IPR012340">
    <property type="entry name" value="NA-bd_OB-fold"/>
</dbReference>
<dbReference type="InterPro" id="IPR006196">
    <property type="entry name" value="RNA-binding_domain_S1_IF1"/>
</dbReference>
<dbReference type="InterPro" id="IPR004368">
    <property type="entry name" value="TIF_IF1"/>
</dbReference>
<dbReference type="NCBIfam" id="TIGR00008">
    <property type="entry name" value="infA"/>
    <property type="match status" value="1"/>
</dbReference>
<dbReference type="PANTHER" id="PTHR33370">
    <property type="entry name" value="TRANSLATION INITIATION FACTOR IF-1, CHLOROPLASTIC"/>
    <property type="match status" value="1"/>
</dbReference>
<dbReference type="PANTHER" id="PTHR33370:SF1">
    <property type="entry name" value="TRANSLATION INITIATION FACTOR IF-1, CHLOROPLASTIC"/>
    <property type="match status" value="1"/>
</dbReference>
<dbReference type="Pfam" id="PF01176">
    <property type="entry name" value="eIF-1a"/>
    <property type="match status" value="1"/>
</dbReference>
<dbReference type="SUPFAM" id="SSF50249">
    <property type="entry name" value="Nucleic acid-binding proteins"/>
    <property type="match status" value="1"/>
</dbReference>
<dbReference type="PROSITE" id="PS50832">
    <property type="entry name" value="S1_IF1_TYPE"/>
    <property type="match status" value="1"/>
</dbReference>